<proteinExistence type="inferred from homology"/>
<name>COAD_SHEON</name>
<comment type="function">
    <text evidence="1">Reversibly transfers an adenylyl group from ATP to 4'-phosphopantetheine, yielding dephospho-CoA (dPCoA) and pyrophosphate.</text>
</comment>
<comment type="catalytic activity">
    <reaction evidence="1">
        <text>(R)-4'-phosphopantetheine + ATP + H(+) = 3'-dephospho-CoA + diphosphate</text>
        <dbReference type="Rhea" id="RHEA:19801"/>
        <dbReference type="ChEBI" id="CHEBI:15378"/>
        <dbReference type="ChEBI" id="CHEBI:30616"/>
        <dbReference type="ChEBI" id="CHEBI:33019"/>
        <dbReference type="ChEBI" id="CHEBI:57328"/>
        <dbReference type="ChEBI" id="CHEBI:61723"/>
        <dbReference type="EC" id="2.7.7.3"/>
    </reaction>
</comment>
<comment type="cofactor">
    <cofactor evidence="1">
        <name>Mg(2+)</name>
        <dbReference type="ChEBI" id="CHEBI:18420"/>
    </cofactor>
</comment>
<comment type="pathway">
    <text evidence="1">Cofactor biosynthesis; coenzyme A biosynthesis; CoA from (R)-pantothenate: step 4/5.</text>
</comment>
<comment type="subunit">
    <text evidence="1">Homohexamer.</text>
</comment>
<comment type="subcellular location">
    <subcellularLocation>
        <location evidence="1">Cytoplasm</location>
    </subcellularLocation>
</comment>
<comment type="similarity">
    <text evidence="1">Belongs to the bacterial CoaD family.</text>
</comment>
<reference key="1">
    <citation type="journal article" date="2002" name="Nat. Biotechnol.">
        <title>Genome sequence of the dissimilatory metal ion-reducing bacterium Shewanella oneidensis.</title>
        <authorList>
            <person name="Heidelberg J.F."/>
            <person name="Paulsen I.T."/>
            <person name="Nelson K.E."/>
            <person name="Gaidos E.J."/>
            <person name="Nelson W.C."/>
            <person name="Read T.D."/>
            <person name="Eisen J.A."/>
            <person name="Seshadri R."/>
            <person name="Ward N.L."/>
            <person name="Methe B.A."/>
            <person name="Clayton R.A."/>
            <person name="Meyer T."/>
            <person name="Tsapin A."/>
            <person name="Scott J."/>
            <person name="Beanan M.J."/>
            <person name="Brinkac L.M."/>
            <person name="Daugherty S.C."/>
            <person name="DeBoy R.T."/>
            <person name="Dodson R.J."/>
            <person name="Durkin A.S."/>
            <person name="Haft D.H."/>
            <person name="Kolonay J.F."/>
            <person name="Madupu R."/>
            <person name="Peterson J.D."/>
            <person name="Umayam L.A."/>
            <person name="White O."/>
            <person name="Wolf A.M."/>
            <person name="Vamathevan J.J."/>
            <person name="Weidman J.F."/>
            <person name="Impraim M."/>
            <person name="Lee K."/>
            <person name="Berry K.J."/>
            <person name="Lee C."/>
            <person name="Mueller J."/>
            <person name="Khouri H.M."/>
            <person name="Gill J."/>
            <person name="Utterback T.R."/>
            <person name="McDonald L.A."/>
            <person name="Feldblyum T.V."/>
            <person name="Smith H.O."/>
            <person name="Venter J.C."/>
            <person name="Nealson K.H."/>
            <person name="Fraser C.M."/>
        </authorList>
    </citation>
    <scope>NUCLEOTIDE SEQUENCE [LARGE SCALE GENOMIC DNA]</scope>
    <source>
        <strain>ATCC 700550 / JCM 31522 / CIP 106686 / LMG 19005 / NCIMB 14063 / MR-1</strain>
    </source>
</reference>
<keyword id="KW-0067">ATP-binding</keyword>
<keyword id="KW-0173">Coenzyme A biosynthesis</keyword>
<keyword id="KW-0963">Cytoplasm</keyword>
<keyword id="KW-0460">Magnesium</keyword>
<keyword id="KW-0547">Nucleotide-binding</keyword>
<keyword id="KW-0548">Nucleotidyltransferase</keyword>
<keyword id="KW-1185">Reference proteome</keyword>
<keyword id="KW-0808">Transferase</keyword>
<dbReference type="EC" id="2.7.7.3" evidence="1"/>
<dbReference type="EMBL" id="AE014299">
    <property type="protein sequence ID" value="AAN57643.1"/>
    <property type="molecule type" value="Genomic_DNA"/>
</dbReference>
<dbReference type="RefSeq" id="NP_720200.1">
    <property type="nucleotide sequence ID" value="NC_004347.2"/>
</dbReference>
<dbReference type="RefSeq" id="WP_011074274.1">
    <property type="nucleotide sequence ID" value="NZ_CP053946.1"/>
</dbReference>
<dbReference type="SMR" id="Q8E8I0"/>
<dbReference type="STRING" id="211586.SO_4684"/>
<dbReference type="PaxDb" id="211586-SO_4684"/>
<dbReference type="KEGG" id="son:SO_4684"/>
<dbReference type="PATRIC" id="fig|211586.12.peg.4542"/>
<dbReference type="eggNOG" id="COG0669">
    <property type="taxonomic scope" value="Bacteria"/>
</dbReference>
<dbReference type="HOGENOM" id="CLU_100149_0_1_6"/>
<dbReference type="OrthoDB" id="9806661at2"/>
<dbReference type="PhylomeDB" id="Q8E8I0"/>
<dbReference type="BioCyc" id="SONE211586:G1GMP-4330-MONOMER"/>
<dbReference type="UniPathway" id="UPA00241">
    <property type="reaction ID" value="UER00355"/>
</dbReference>
<dbReference type="Proteomes" id="UP000008186">
    <property type="component" value="Chromosome"/>
</dbReference>
<dbReference type="GO" id="GO:0005737">
    <property type="term" value="C:cytoplasm"/>
    <property type="evidence" value="ECO:0007669"/>
    <property type="project" value="UniProtKB-SubCell"/>
</dbReference>
<dbReference type="GO" id="GO:0005524">
    <property type="term" value="F:ATP binding"/>
    <property type="evidence" value="ECO:0007669"/>
    <property type="project" value="UniProtKB-KW"/>
</dbReference>
<dbReference type="GO" id="GO:0004595">
    <property type="term" value="F:pantetheine-phosphate adenylyltransferase activity"/>
    <property type="evidence" value="ECO:0000318"/>
    <property type="project" value="GO_Central"/>
</dbReference>
<dbReference type="GO" id="GO:0015937">
    <property type="term" value="P:coenzyme A biosynthetic process"/>
    <property type="evidence" value="ECO:0000318"/>
    <property type="project" value="GO_Central"/>
</dbReference>
<dbReference type="CDD" id="cd02163">
    <property type="entry name" value="PPAT"/>
    <property type="match status" value="1"/>
</dbReference>
<dbReference type="FunFam" id="3.40.50.620:FF:000012">
    <property type="entry name" value="Phosphopantetheine adenylyltransferase"/>
    <property type="match status" value="1"/>
</dbReference>
<dbReference type="Gene3D" id="3.40.50.620">
    <property type="entry name" value="HUPs"/>
    <property type="match status" value="1"/>
</dbReference>
<dbReference type="HAMAP" id="MF_00151">
    <property type="entry name" value="PPAT_bact"/>
    <property type="match status" value="1"/>
</dbReference>
<dbReference type="InterPro" id="IPR004821">
    <property type="entry name" value="Cyt_trans-like"/>
</dbReference>
<dbReference type="InterPro" id="IPR001980">
    <property type="entry name" value="PPAT"/>
</dbReference>
<dbReference type="InterPro" id="IPR014729">
    <property type="entry name" value="Rossmann-like_a/b/a_fold"/>
</dbReference>
<dbReference type="NCBIfam" id="TIGR01510">
    <property type="entry name" value="coaD_prev_kdtB"/>
    <property type="match status" value="1"/>
</dbReference>
<dbReference type="NCBIfam" id="TIGR00125">
    <property type="entry name" value="cyt_tran_rel"/>
    <property type="match status" value="1"/>
</dbReference>
<dbReference type="PANTHER" id="PTHR21342">
    <property type="entry name" value="PHOSPHOPANTETHEINE ADENYLYLTRANSFERASE"/>
    <property type="match status" value="1"/>
</dbReference>
<dbReference type="PANTHER" id="PTHR21342:SF1">
    <property type="entry name" value="PHOSPHOPANTETHEINE ADENYLYLTRANSFERASE"/>
    <property type="match status" value="1"/>
</dbReference>
<dbReference type="Pfam" id="PF01467">
    <property type="entry name" value="CTP_transf_like"/>
    <property type="match status" value="1"/>
</dbReference>
<dbReference type="PRINTS" id="PR01020">
    <property type="entry name" value="LPSBIOSNTHSS"/>
</dbReference>
<dbReference type="SUPFAM" id="SSF52374">
    <property type="entry name" value="Nucleotidylyl transferase"/>
    <property type="match status" value="1"/>
</dbReference>
<gene>
    <name evidence="1" type="primary">coaD</name>
    <name type="ordered locus">SO_4684</name>
</gene>
<accession>Q8E8I0</accession>
<protein>
    <recommendedName>
        <fullName evidence="1">Phosphopantetheine adenylyltransferase</fullName>
        <ecNumber evidence="1">2.7.7.3</ecNumber>
    </recommendedName>
    <alternativeName>
        <fullName evidence="1">Dephospho-CoA pyrophosphorylase</fullName>
    </alternativeName>
    <alternativeName>
        <fullName evidence="1">Pantetheine-phosphate adenylyltransferase</fullName>
        <shortName evidence="1">PPAT</shortName>
    </alternativeName>
</protein>
<feature type="chain" id="PRO_0000156269" description="Phosphopantetheine adenylyltransferase">
    <location>
        <begin position="1"/>
        <end position="163"/>
    </location>
</feature>
<feature type="binding site" evidence="1">
    <location>
        <begin position="10"/>
        <end position="11"/>
    </location>
    <ligand>
        <name>ATP</name>
        <dbReference type="ChEBI" id="CHEBI:30616"/>
    </ligand>
</feature>
<feature type="binding site" evidence="1">
    <location>
        <position position="10"/>
    </location>
    <ligand>
        <name>substrate</name>
    </ligand>
</feature>
<feature type="binding site" evidence="1">
    <location>
        <position position="18"/>
    </location>
    <ligand>
        <name>ATP</name>
        <dbReference type="ChEBI" id="CHEBI:30616"/>
    </ligand>
</feature>
<feature type="binding site" evidence="1">
    <location>
        <position position="42"/>
    </location>
    <ligand>
        <name>substrate</name>
    </ligand>
</feature>
<feature type="binding site" evidence="1">
    <location>
        <position position="74"/>
    </location>
    <ligand>
        <name>substrate</name>
    </ligand>
</feature>
<feature type="binding site" evidence="1">
    <location>
        <position position="88"/>
    </location>
    <ligand>
        <name>substrate</name>
    </ligand>
</feature>
<feature type="binding site" evidence="1">
    <location>
        <begin position="89"/>
        <end position="91"/>
    </location>
    <ligand>
        <name>ATP</name>
        <dbReference type="ChEBI" id="CHEBI:30616"/>
    </ligand>
</feature>
<feature type="binding site" evidence="1">
    <location>
        <position position="99"/>
    </location>
    <ligand>
        <name>ATP</name>
        <dbReference type="ChEBI" id="CHEBI:30616"/>
    </ligand>
</feature>
<feature type="binding site" evidence="1">
    <location>
        <begin position="124"/>
        <end position="130"/>
    </location>
    <ligand>
        <name>ATP</name>
        <dbReference type="ChEBI" id="CHEBI:30616"/>
    </ligand>
</feature>
<feature type="site" description="Transition state stabilizer" evidence="1">
    <location>
        <position position="18"/>
    </location>
</feature>
<sequence>MHTRAIYPGTFDPITNGHADLIERAAKLFKHVIIGIAANPSKQPRFTLEERVELVNRVTAHLDNVEVVGFSGLLVDFAKEQRASVLVRGLRAVSDFEYEFQLANMNRRLSPDLESVFLTPAEENSFISSTLVKEVALHGGDVSQFVHPEVASALAAKLKLAKA</sequence>
<organism>
    <name type="scientific">Shewanella oneidensis (strain ATCC 700550 / JCM 31522 / CIP 106686 / LMG 19005 / NCIMB 14063 / MR-1)</name>
    <dbReference type="NCBI Taxonomy" id="211586"/>
    <lineage>
        <taxon>Bacteria</taxon>
        <taxon>Pseudomonadati</taxon>
        <taxon>Pseudomonadota</taxon>
        <taxon>Gammaproteobacteria</taxon>
        <taxon>Alteromonadales</taxon>
        <taxon>Shewanellaceae</taxon>
        <taxon>Shewanella</taxon>
    </lineage>
</organism>
<evidence type="ECO:0000255" key="1">
    <source>
        <dbReference type="HAMAP-Rule" id="MF_00151"/>
    </source>
</evidence>